<gene>
    <name type="ordered locus">PCC8801_0196</name>
</gene>
<name>Y196_RIPO1</name>
<comment type="similarity">
    <text evidence="1">Belongs to the RemA family.</text>
</comment>
<feature type="chain" id="PRO_0000373782" description="Putative regulatory protein PCC8801_0196">
    <location>
        <begin position="1"/>
        <end position="89"/>
    </location>
</feature>
<evidence type="ECO:0000255" key="1">
    <source>
        <dbReference type="HAMAP-Rule" id="MF_01503"/>
    </source>
</evidence>
<sequence length="89" mass="9664">MESIQLINIGFGNIVSANRVIAIVSPESAPIKRIITDARDRGQLVDATYGRRTRAVIITDSSHVVLSAIQPETVAHRFVVSKEAHANSN</sequence>
<keyword id="KW-1185">Reference proteome</keyword>
<accession>B7K1Z3</accession>
<dbReference type="EMBL" id="CP001287">
    <property type="protein sequence ID" value="ACK64300.1"/>
    <property type="molecule type" value="Genomic_DNA"/>
</dbReference>
<dbReference type="RefSeq" id="WP_012593577.1">
    <property type="nucleotide sequence ID" value="NC_011726.1"/>
</dbReference>
<dbReference type="SMR" id="B7K1Z3"/>
<dbReference type="STRING" id="41431.PCC8801_0196"/>
<dbReference type="KEGG" id="cyp:PCC8801_0196"/>
<dbReference type="eggNOG" id="COG2052">
    <property type="taxonomic scope" value="Bacteria"/>
</dbReference>
<dbReference type="HOGENOM" id="CLU_165326_0_0_3"/>
<dbReference type="OrthoDB" id="5432174at2"/>
<dbReference type="Proteomes" id="UP000008204">
    <property type="component" value="Chromosome"/>
</dbReference>
<dbReference type="HAMAP" id="MF_01503">
    <property type="entry name" value="RemA"/>
    <property type="match status" value="1"/>
</dbReference>
<dbReference type="InterPro" id="IPR007169">
    <property type="entry name" value="RemA-like"/>
</dbReference>
<dbReference type="NCBIfam" id="NF046064">
    <property type="entry name" value="MtxBflmRegRemA"/>
    <property type="match status" value="1"/>
</dbReference>
<dbReference type="NCBIfam" id="NF003315">
    <property type="entry name" value="PRK04323.1"/>
    <property type="match status" value="1"/>
</dbReference>
<dbReference type="PANTHER" id="PTHR38449:SF1">
    <property type="entry name" value="REGULATORY PROTEIN SSL2874-RELATED"/>
    <property type="match status" value="1"/>
</dbReference>
<dbReference type="PANTHER" id="PTHR38449">
    <property type="entry name" value="REGULATORY PROTEIN TM_1690-RELATED"/>
    <property type="match status" value="1"/>
</dbReference>
<dbReference type="Pfam" id="PF04025">
    <property type="entry name" value="RemA-like"/>
    <property type="match status" value="1"/>
</dbReference>
<organism>
    <name type="scientific">Rippkaea orientalis (strain PCC 8801 / RF-1)</name>
    <name type="common">Cyanothece sp. (strain PCC 8801)</name>
    <dbReference type="NCBI Taxonomy" id="41431"/>
    <lineage>
        <taxon>Bacteria</taxon>
        <taxon>Bacillati</taxon>
        <taxon>Cyanobacteriota</taxon>
        <taxon>Cyanophyceae</taxon>
        <taxon>Oscillatoriophycideae</taxon>
        <taxon>Chroococcales</taxon>
        <taxon>Aphanothecaceae</taxon>
        <taxon>Rippkaea</taxon>
        <taxon>Rippkaea orientalis</taxon>
    </lineage>
</organism>
<reference key="1">
    <citation type="journal article" date="2011" name="MBio">
        <title>Novel metabolic attributes of the genus Cyanothece, comprising a group of unicellular nitrogen-fixing Cyanobacteria.</title>
        <authorList>
            <person name="Bandyopadhyay A."/>
            <person name="Elvitigala T."/>
            <person name="Welsh E."/>
            <person name="Stockel J."/>
            <person name="Liberton M."/>
            <person name="Min H."/>
            <person name="Sherman L.A."/>
            <person name="Pakrasi H.B."/>
        </authorList>
    </citation>
    <scope>NUCLEOTIDE SEQUENCE [LARGE SCALE GENOMIC DNA]</scope>
    <source>
        <strain>PCC 8801 / RF-1</strain>
    </source>
</reference>
<protein>
    <recommendedName>
        <fullName evidence="1">Putative regulatory protein PCC8801_0196</fullName>
    </recommendedName>
</protein>
<proteinExistence type="inferred from homology"/>